<dbReference type="EC" id="2.7.7.6" evidence="1"/>
<dbReference type="EMBL" id="CT573213">
    <property type="protein sequence ID" value="CAJ59737.1"/>
    <property type="molecule type" value="Genomic_DNA"/>
</dbReference>
<dbReference type="RefSeq" id="WP_011602294.1">
    <property type="nucleotide sequence ID" value="NC_008278.1"/>
</dbReference>
<dbReference type="SMR" id="Q0RRT0"/>
<dbReference type="STRING" id="326424.FRAAL1072"/>
<dbReference type="KEGG" id="fal:FRAAL1072"/>
<dbReference type="eggNOG" id="COG0085">
    <property type="taxonomic scope" value="Bacteria"/>
</dbReference>
<dbReference type="HOGENOM" id="CLU_000524_4_3_11"/>
<dbReference type="OrthoDB" id="9803954at2"/>
<dbReference type="Proteomes" id="UP000000657">
    <property type="component" value="Chromosome"/>
</dbReference>
<dbReference type="GO" id="GO:0000428">
    <property type="term" value="C:DNA-directed RNA polymerase complex"/>
    <property type="evidence" value="ECO:0007669"/>
    <property type="project" value="UniProtKB-KW"/>
</dbReference>
<dbReference type="GO" id="GO:0003677">
    <property type="term" value="F:DNA binding"/>
    <property type="evidence" value="ECO:0007669"/>
    <property type="project" value="UniProtKB-UniRule"/>
</dbReference>
<dbReference type="GO" id="GO:0003899">
    <property type="term" value="F:DNA-directed RNA polymerase activity"/>
    <property type="evidence" value="ECO:0007669"/>
    <property type="project" value="UniProtKB-UniRule"/>
</dbReference>
<dbReference type="GO" id="GO:0032549">
    <property type="term" value="F:ribonucleoside binding"/>
    <property type="evidence" value="ECO:0007669"/>
    <property type="project" value="InterPro"/>
</dbReference>
<dbReference type="GO" id="GO:0006351">
    <property type="term" value="P:DNA-templated transcription"/>
    <property type="evidence" value="ECO:0007669"/>
    <property type="project" value="UniProtKB-UniRule"/>
</dbReference>
<dbReference type="CDD" id="cd00653">
    <property type="entry name" value="RNA_pol_B_RPB2"/>
    <property type="match status" value="1"/>
</dbReference>
<dbReference type="FunFam" id="3.90.1800.10:FF:000001">
    <property type="entry name" value="DNA-directed RNA polymerase subunit beta"/>
    <property type="match status" value="1"/>
</dbReference>
<dbReference type="Gene3D" id="2.40.50.100">
    <property type="match status" value="1"/>
</dbReference>
<dbReference type="Gene3D" id="2.40.50.150">
    <property type="match status" value="1"/>
</dbReference>
<dbReference type="Gene3D" id="3.90.1100.10">
    <property type="match status" value="1"/>
</dbReference>
<dbReference type="Gene3D" id="2.30.150.10">
    <property type="entry name" value="DNA-directed RNA polymerase, beta subunit, external 1 domain"/>
    <property type="match status" value="1"/>
</dbReference>
<dbReference type="Gene3D" id="2.40.270.10">
    <property type="entry name" value="DNA-directed RNA polymerase, subunit 2, domain 6"/>
    <property type="match status" value="1"/>
</dbReference>
<dbReference type="Gene3D" id="3.90.1800.10">
    <property type="entry name" value="RNA polymerase alpha subunit dimerisation domain"/>
    <property type="match status" value="1"/>
</dbReference>
<dbReference type="Gene3D" id="3.90.1110.10">
    <property type="entry name" value="RNA polymerase Rpb2, domain 2"/>
    <property type="match status" value="1"/>
</dbReference>
<dbReference type="HAMAP" id="MF_01321">
    <property type="entry name" value="RNApol_bact_RpoB"/>
    <property type="match status" value="1"/>
</dbReference>
<dbReference type="InterPro" id="IPR042107">
    <property type="entry name" value="DNA-dir_RNA_pol_bsu_ext_1_sf"/>
</dbReference>
<dbReference type="InterPro" id="IPR019462">
    <property type="entry name" value="DNA-dir_RNA_pol_bsu_external_1"/>
</dbReference>
<dbReference type="InterPro" id="IPR015712">
    <property type="entry name" value="DNA-dir_RNA_pol_su2"/>
</dbReference>
<dbReference type="InterPro" id="IPR007120">
    <property type="entry name" value="DNA-dir_RNAP_su2_dom"/>
</dbReference>
<dbReference type="InterPro" id="IPR037033">
    <property type="entry name" value="DNA-dir_RNAP_su2_hyb_sf"/>
</dbReference>
<dbReference type="InterPro" id="IPR010243">
    <property type="entry name" value="RNA_pol_bsu_bac"/>
</dbReference>
<dbReference type="InterPro" id="IPR007121">
    <property type="entry name" value="RNA_pol_bsu_CS"/>
</dbReference>
<dbReference type="InterPro" id="IPR007644">
    <property type="entry name" value="RNA_pol_bsu_protrusion"/>
</dbReference>
<dbReference type="InterPro" id="IPR007642">
    <property type="entry name" value="RNA_pol_Rpb2_2"/>
</dbReference>
<dbReference type="InterPro" id="IPR037034">
    <property type="entry name" value="RNA_pol_Rpb2_2_sf"/>
</dbReference>
<dbReference type="InterPro" id="IPR007645">
    <property type="entry name" value="RNA_pol_Rpb2_3"/>
</dbReference>
<dbReference type="InterPro" id="IPR007641">
    <property type="entry name" value="RNA_pol_Rpb2_7"/>
</dbReference>
<dbReference type="InterPro" id="IPR014724">
    <property type="entry name" value="RNA_pol_RPB2_OB-fold"/>
</dbReference>
<dbReference type="NCBIfam" id="NF001616">
    <property type="entry name" value="PRK00405.1"/>
    <property type="match status" value="1"/>
</dbReference>
<dbReference type="NCBIfam" id="TIGR02013">
    <property type="entry name" value="rpoB"/>
    <property type="match status" value="1"/>
</dbReference>
<dbReference type="PANTHER" id="PTHR20856">
    <property type="entry name" value="DNA-DIRECTED RNA POLYMERASE I SUBUNIT 2"/>
    <property type="match status" value="1"/>
</dbReference>
<dbReference type="Pfam" id="PF04563">
    <property type="entry name" value="RNA_pol_Rpb2_1"/>
    <property type="match status" value="1"/>
</dbReference>
<dbReference type="Pfam" id="PF04561">
    <property type="entry name" value="RNA_pol_Rpb2_2"/>
    <property type="match status" value="1"/>
</dbReference>
<dbReference type="Pfam" id="PF04565">
    <property type="entry name" value="RNA_pol_Rpb2_3"/>
    <property type="match status" value="1"/>
</dbReference>
<dbReference type="Pfam" id="PF10385">
    <property type="entry name" value="RNA_pol_Rpb2_45"/>
    <property type="match status" value="1"/>
</dbReference>
<dbReference type="Pfam" id="PF00562">
    <property type="entry name" value="RNA_pol_Rpb2_6"/>
    <property type="match status" value="1"/>
</dbReference>
<dbReference type="Pfam" id="PF04560">
    <property type="entry name" value="RNA_pol_Rpb2_7"/>
    <property type="match status" value="1"/>
</dbReference>
<dbReference type="SUPFAM" id="SSF64484">
    <property type="entry name" value="beta and beta-prime subunits of DNA dependent RNA-polymerase"/>
    <property type="match status" value="1"/>
</dbReference>
<dbReference type="PROSITE" id="PS01166">
    <property type="entry name" value="RNA_POL_BETA"/>
    <property type="match status" value="1"/>
</dbReference>
<comment type="function">
    <text evidence="1">DNA-dependent RNA polymerase catalyzes the transcription of DNA into RNA using the four ribonucleoside triphosphates as substrates.</text>
</comment>
<comment type="catalytic activity">
    <reaction evidence="1">
        <text>RNA(n) + a ribonucleoside 5'-triphosphate = RNA(n+1) + diphosphate</text>
        <dbReference type="Rhea" id="RHEA:21248"/>
        <dbReference type="Rhea" id="RHEA-COMP:14527"/>
        <dbReference type="Rhea" id="RHEA-COMP:17342"/>
        <dbReference type="ChEBI" id="CHEBI:33019"/>
        <dbReference type="ChEBI" id="CHEBI:61557"/>
        <dbReference type="ChEBI" id="CHEBI:140395"/>
        <dbReference type="EC" id="2.7.7.6"/>
    </reaction>
</comment>
<comment type="subunit">
    <text evidence="1">The RNAP catalytic core consists of 2 alpha, 1 beta, 1 beta' and 1 omega subunit. When a sigma factor is associated with the core the holoenzyme is formed, which can initiate transcription.</text>
</comment>
<comment type="similarity">
    <text evidence="1">Belongs to the RNA polymerase beta chain family.</text>
</comment>
<name>RPOB_FRAAA</name>
<sequence>MAASRSSSRISFAKIIEPLEVPDLLALQTQSFDWLIGSDAWAERVQEAIDSGRDDVPITSGLEEVFEEISPIEDFSGSMSLSFRDHRFEPPKYSVEECKDKDMTFSAPLFVTAEFTNNTTGEIKSQTVFMGDFPLMTPKGTFVINGTERVVVSQLVRSPGVYFERSLDKASDKDLYSCKVIPSRGAWLEFEIDKRDTVGVRIDRKRRQSVTVLLKALGWDEARILERFGDFPSMRITLEKDHTASQDDALLDIYRKLRPGEPPTRESAQTLLENLFFNPKRYDLAKVGRYKVNKKLTLEIAHDVGVLTEDDIVRTIEYVVKLHAGADPAEYEVDDIDHFGNRRLRTVGELIQNQVRLGLARMERVVRERMTTQDVEAITPQTLINIRPVVASIKEFFGTSQLSQFMDQTNPLAGLTHKRRLSALGPGGLSRERAGFEVRDVHPSHYGRMCPIETPEGPNIGLIGSLSTFARVNPFGFVETPYRKVVNGRVTDQIDYLTADEEDRHVKAQANTPLSPDGTFAEDRVLVRRKGGEVEFIPPDEVDYMDVSPRQMVSVATAMIPFLEHDDANRALMGSNMQRQSVPLLRSEAPLVGTGMEARAAKDAGDVVVCVQAGVVEDLSADYITVMHDDGTRRTYRLAKFRRSNQGTCINQKPIVFEGDRVEAGQVIADGPCTDNGEMALGKNLLVAFMPWEGHNYEDAIILSQRLVQDDVLSSIHIEEHEVDARDTKLGPEEITRDIPNVAEEVLADLDERGIIRIGAEVSPGDVLVGKVTPKGETELTPEERLLRAIFGEKAREVRDTSLKVPHGESGKVIGVRVFSREDGDELPPGVNELVRVYVAQKRKITDGDKLAGRHGNKGVIAKILPQEDMPFLEDGTPVDIVLNPHGVPRRMNIGQILETHLGWVAKTGWQVDAGTEDWKERLRGIGADSSTPGTNVATPVFDGAREEEITGLLDSTLPNRDGVQLIGSSGKATLFDGRTGEPYPYPVAVGYIYILKLLHLVDDKIHARSTGPYSMITQQPLGGKAQFGGQRFGEMEVWALEAYGAAYALQELLTIKSDDVVGRVKVYEAIVKGENIPEPGIPESFKVLIKEMQSLCLNVEVLSSDGVQIEMRDTDEDVFRAAEELGIDLSRREPSSVEEV</sequence>
<accession>Q0RRT0</accession>
<keyword id="KW-0240">DNA-directed RNA polymerase</keyword>
<keyword id="KW-0548">Nucleotidyltransferase</keyword>
<keyword id="KW-1185">Reference proteome</keyword>
<keyword id="KW-0804">Transcription</keyword>
<keyword id="KW-0808">Transferase</keyword>
<proteinExistence type="inferred from homology"/>
<reference key="1">
    <citation type="journal article" date="2007" name="Genome Res.">
        <title>Genome characteristics of facultatively symbiotic Frankia sp. strains reflect host range and host plant biogeography.</title>
        <authorList>
            <person name="Normand P."/>
            <person name="Lapierre P."/>
            <person name="Tisa L.S."/>
            <person name="Gogarten J.P."/>
            <person name="Alloisio N."/>
            <person name="Bagnarol E."/>
            <person name="Bassi C.A."/>
            <person name="Berry A.M."/>
            <person name="Bickhart D.M."/>
            <person name="Choisne N."/>
            <person name="Couloux A."/>
            <person name="Cournoyer B."/>
            <person name="Cruveiller S."/>
            <person name="Daubin V."/>
            <person name="Demange N."/>
            <person name="Francino M.P."/>
            <person name="Goltsman E."/>
            <person name="Huang Y."/>
            <person name="Kopp O.R."/>
            <person name="Labarre L."/>
            <person name="Lapidus A."/>
            <person name="Lavire C."/>
            <person name="Marechal J."/>
            <person name="Martinez M."/>
            <person name="Mastronunzio J.E."/>
            <person name="Mullin B.C."/>
            <person name="Niemann J."/>
            <person name="Pujic P."/>
            <person name="Rawnsley T."/>
            <person name="Rouy Z."/>
            <person name="Schenowitz C."/>
            <person name="Sellstedt A."/>
            <person name="Tavares F."/>
            <person name="Tomkins J.P."/>
            <person name="Vallenet D."/>
            <person name="Valverde C."/>
            <person name="Wall L.G."/>
            <person name="Wang Y."/>
            <person name="Medigue C."/>
            <person name="Benson D.R."/>
        </authorList>
    </citation>
    <scope>NUCLEOTIDE SEQUENCE [LARGE SCALE GENOMIC DNA]</scope>
    <source>
        <strain>DSM 45986 / CECT 9034 / ACN14a</strain>
    </source>
</reference>
<feature type="chain" id="PRO_0000300320" description="DNA-directed RNA polymerase subunit beta">
    <location>
        <begin position="1"/>
        <end position="1141"/>
    </location>
</feature>
<gene>
    <name evidence="1" type="primary">rpoB</name>
    <name type="ordered locus">FRAAL1072</name>
</gene>
<protein>
    <recommendedName>
        <fullName evidence="1">DNA-directed RNA polymerase subunit beta</fullName>
        <shortName evidence="1">RNAP subunit beta</shortName>
        <ecNumber evidence="1">2.7.7.6</ecNumber>
    </recommendedName>
    <alternativeName>
        <fullName evidence="1">RNA polymerase subunit beta</fullName>
    </alternativeName>
    <alternativeName>
        <fullName evidence="1">Transcriptase subunit beta</fullName>
    </alternativeName>
</protein>
<evidence type="ECO:0000255" key="1">
    <source>
        <dbReference type="HAMAP-Rule" id="MF_01321"/>
    </source>
</evidence>
<organism>
    <name type="scientific">Frankia alni (strain DSM 45986 / CECT 9034 / ACN14a)</name>
    <dbReference type="NCBI Taxonomy" id="326424"/>
    <lineage>
        <taxon>Bacteria</taxon>
        <taxon>Bacillati</taxon>
        <taxon>Actinomycetota</taxon>
        <taxon>Actinomycetes</taxon>
        <taxon>Frankiales</taxon>
        <taxon>Frankiaceae</taxon>
        <taxon>Frankia</taxon>
    </lineage>
</organism>